<organism>
    <name type="scientific">Burkholderia ambifaria (strain MC40-6)</name>
    <dbReference type="NCBI Taxonomy" id="398577"/>
    <lineage>
        <taxon>Bacteria</taxon>
        <taxon>Pseudomonadati</taxon>
        <taxon>Pseudomonadota</taxon>
        <taxon>Betaproteobacteria</taxon>
        <taxon>Burkholderiales</taxon>
        <taxon>Burkholderiaceae</taxon>
        <taxon>Burkholderia</taxon>
        <taxon>Burkholderia cepacia complex</taxon>
    </lineage>
</organism>
<name>OBG_BURA4</name>
<proteinExistence type="inferred from homology"/>
<keyword id="KW-0963">Cytoplasm</keyword>
<keyword id="KW-0342">GTP-binding</keyword>
<keyword id="KW-0378">Hydrolase</keyword>
<keyword id="KW-0460">Magnesium</keyword>
<keyword id="KW-0479">Metal-binding</keyword>
<keyword id="KW-0547">Nucleotide-binding</keyword>
<accession>B1YSU7</accession>
<sequence>MKFIDEARIEVIAGDGGDGSASMRREKFVPFGGPDGGDGGRGGNVYAIADRNINTLIDYRYAKKHLARNGENGRGSDCYGKGGDDVTLRMPVGTVVTDMDTGELIADLTEHGQQVMLAQGGAGGLGNLHFKSSTNRAPRQKTDGKPGERRMLRLELKVLADVGLLGMPNAGKSTFISSVSNAKPKIADYPFTTLAPNLGVVRVGPSKSFVIADIPGLIEGAAEGAGLGHQFLRHLQRTGVLLHLVDLAPFDENVDPVAEAKAIVGELRKYDEALYEKPRWLVLNKLDMVPEDEREARVADFLARFEWDGPVFEISALTGQGCEALCYAIYDYLAEHSDAHRAAEEEDLATDVRFRDAPPADGGATPGGDA</sequence>
<reference key="1">
    <citation type="submission" date="2008-04" db="EMBL/GenBank/DDBJ databases">
        <title>Complete sequence of chromosome 1 of Burkholderia ambifaria MC40-6.</title>
        <authorList>
            <person name="Copeland A."/>
            <person name="Lucas S."/>
            <person name="Lapidus A."/>
            <person name="Glavina del Rio T."/>
            <person name="Dalin E."/>
            <person name="Tice H."/>
            <person name="Pitluck S."/>
            <person name="Chain P."/>
            <person name="Malfatti S."/>
            <person name="Shin M."/>
            <person name="Vergez L."/>
            <person name="Lang D."/>
            <person name="Schmutz J."/>
            <person name="Larimer F."/>
            <person name="Land M."/>
            <person name="Hauser L."/>
            <person name="Kyrpides N."/>
            <person name="Lykidis A."/>
            <person name="Ramette A."/>
            <person name="Konstantinidis K."/>
            <person name="Tiedje J."/>
            <person name="Richardson P."/>
        </authorList>
    </citation>
    <scope>NUCLEOTIDE SEQUENCE [LARGE SCALE GENOMIC DNA]</scope>
    <source>
        <strain>MC40-6</strain>
    </source>
</reference>
<gene>
    <name evidence="1" type="primary">obg</name>
    <name type="ordered locus">BamMC406_0511</name>
</gene>
<comment type="function">
    <text evidence="1">An essential GTPase which binds GTP, GDP and possibly (p)ppGpp with moderate affinity, with high nucleotide exchange rates and a fairly low GTP hydrolysis rate. Plays a role in control of the cell cycle, stress response, ribosome biogenesis and in those bacteria that undergo differentiation, in morphogenesis control.</text>
</comment>
<comment type="cofactor">
    <cofactor evidence="1">
        <name>Mg(2+)</name>
        <dbReference type="ChEBI" id="CHEBI:18420"/>
    </cofactor>
</comment>
<comment type="subunit">
    <text evidence="1">Monomer.</text>
</comment>
<comment type="subcellular location">
    <subcellularLocation>
        <location evidence="1">Cytoplasm</location>
    </subcellularLocation>
</comment>
<comment type="similarity">
    <text evidence="1">Belongs to the TRAFAC class OBG-HflX-like GTPase superfamily. OBG GTPase family.</text>
</comment>
<evidence type="ECO:0000255" key="1">
    <source>
        <dbReference type="HAMAP-Rule" id="MF_01454"/>
    </source>
</evidence>
<evidence type="ECO:0000255" key="2">
    <source>
        <dbReference type="PROSITE-ProRule" id="PRU01231"/>
    </source>
</evidence>
<evidence type="ECO:0000256" key="3">
    <source>
        <dbReference type="SAM" id="MobiDB-lite"/>
    </source>
</evidence>
<dbReference type="EC" id="3.6.5.-" evidence="1"/>
<dbReference type="EMBL" id="CP001025">
    <property type="protein sequence ID" value="ACB63008.1"/>
    <property type="molecule type" value="Genomic_DNA"/>
</dbReference>
<dbReference type="SMR" id="B1YSU7"/>
<dbReference type="KEGG" id="bac:BamMC406_0511"/>
<dbReference type="HOGENOM" id="CLU_011747_2_0_4"/>
<dbReference type="OrthoDB" id="9807318at2"/>
<dbReference type="Proteomes" id="UP000001680">
    <property type="component" value="Chromosome 1"/>
</dbReference>
<dbReference type="GO" id="GO:0005737">
    <property type="term" value="C:cytoplasm"/>
    <property type="evidence" value="ECO:0007669"/>
    <property type="project" value="UniProtKB-SubCell"/>
</dbReference>
<dbReference type="GO" id="GO:0005525">
    <property type="term" value="F:GTP binding"/>
    <property type="evidence" value="ECO:0007669"/>
    <property type="project" value="UniProtKB-UniRule"/>
</dbReference>
<dbReference type="GO" id="GO:0003924">
    <property type="term" value="F:GTPase activity"/>
    <property type="evidence" value="ECO:0007669"/>
    <property type="project" value="UniProtKB-UniRule"/>
</dbReference>
<dbReference type="GO" id="GO:0000287">
    <property type="term" value="F:magnesium ion binding"/>
    <property type="evidence" value="ECO:0007669"/>
    <property type="project" value="InterPro"/>
</dbReference>
<dbReference type="GO" id="GO:0042254">
    <property type="term" value="P:ribosome biogenesis"/>
    <property type="evidence" value="ECO:0007669"/>
    <property type="project" value="UniProtKB-UniRule"/>
</dbReference>
<dbReference type="CDD" id="cd01898">
    <property type="entry name" value="Obg"/>
    <property type="match status" value="1"/>
</dbReference>
<dbReference type="FunFam" id="2.70.210.12:FF:000001">
    <property type="entry name" value="GTPase Obg"/>
    <property type="match status" value="1"/>
</dbReference>
<dbReference type="Gene3D" id="2.70.210.12">
    <property type="entry name" value="GTP1/OBG domain"/>
    <property type="match status" value="1"/>
</dbReference>
<dbReference type="Gene3D" id="3.40.50.300">
    <property type="entry name" value="P-loop containing nucleotide triphosphate hydrolases"/>
    <property type="match status" value="1"/>
</dbReference>
<dbReference type="HAMAP" id="MF_01454">
    <property type="entry name" value="GTPase_Obg"/>
    <property type="match status" value="1"/>
</dbReference>
<dbReference type="InterPro" id="IPR031167">
    <property type="entry name" value="G_OBG"/>
</dbReference>
<dbReference type="InterPro" id="IPR006073">
    <property type="entry name" value="GTP-bd"/>
</dbReference>
<dbReference type="InterPro" id="IPR014100">
    <property type="entry name" value="GTP-bd_Obg/CgtA"/>
</dbReference>
<dbReference type="InterPro" id="IPR006074">
    <property type="entry name" value="GTP1-OBG_CS"/>
</dbReference>
<dbReference type="InterPro" id="IPR006169">
    <property type="entry name" value="GTP1_OBG_dom"/>
</dbReference>
<dbReference type="InterPro" id="IPR036726">
    <property type="entry name" value="GTP1_OBG_dom_sf"/>
</dbReference>
<dbReference type="InterPro" id="IPR045086">
    <property type="entry name" value="OBG_GTPase"/>
</dbReference>
<dbReference type="InterPro" id="IPR027417">
    <property type="entry name" value="P-loop_NTPase"/>
</dbReference>
<dbReference type="NCBIfam" id="TIGR02729">
    <property type="entry name" value="Obg_CgtA"/>
    <property type="match status" value="1"/>
</dbReference>
<dbReference type="NCBIfam" id="NF008954">
    <property type="entry name" value="PRK12296.1"/>
    <property type="match status" value="1"/>
</dbReference>
<dbReference type="NCBIfam" id="NF008955">
    <property type="entry name" value="PRK12297.1"/>
    <property type="match status" value="1"/>
</dbReference>
<dbReference type="NCBIfam" id="NF008956">
    <property type="entry name" value="PRK12299.1"/>
    <property type="match status" value="1"/>
</dbReference>
<dbReference type="PANTHER" id="PTHR11702">
    <property type="entry name" value="DEVELOPMENTALLY REGULATED GTP-BINDING PROTEIN-RELATED"/>
    <property type="match status" value="1"/>
</dbReference>
<dbReference type="PANTHER" id="PTHR11702:SF31">
    <property type="entry name" value="MITOCHONDRIAL RIBOSOME-ASSOCIATED GTPASE 2"/>
    <property type="match status" value="1"/>
</dbReference>
<dbReference type="Pfam" id="PF01018">
    <property type="entry name" value="GTP1_OBG"/>
    <property type="match status" value="1"/>
</dbReference>
<dbReference type="Pfam" id="PF01926">
    <property type="entry name" value="MMR_HSR1"/>
    <property type="match status" value="1"/>
</dbReference>
<dbReference type="PIRSF" id="PIRSF002401">
    <property type="entry name" value="GTP_bd_Obg/CgtA"/>
    <property type="match status" value="1"/>
</dbReference>
<dbReference type="PRINTS" id="PR00326">
    <property type="entry name" value="GTP1OBG"/>
</dbReference>
<dbReference type="SUPFAM" id="SSF82051">
    <property type="entry name" value="Obg GTP-binding protein N-terminal domain"/>
    <property type="match status" value="1"/>
</dbReference>
<dbReference type="SUPFAM" id="SSF52540">
    <property type="entry name" value="P-loop containing nucleoside triphosphate hydrolases"/>
    <property type="match status" value="1"/>
</dbReference>
<dbReference type="PROSITE" id="PS51710">
    <property type="entry name" value="G_OBG"/>
    <property type="match status" value="1"/>
</dbReference>
<dbReference type="PROSITE" id="PS00905">
    <property type="entry name" value="GTP1_OBG"/>
    <property type="match status" value="1"/>
</dbReference>
<dbReference type="PROSITE" id="PS51883">
    <property type="entry name" value="OBG"/>
    <property type="match status" value="1"/>
</dbReference>
<feature type="chain" id="PRO_0000385777" description="GTPase Obg">
    <location>
        <begin position="1"/>
        <end position="370"/>
    </location>
</feature>
<feature type="domain" description="Obg" evidence="2">
    <location>
        <begin position="1"/>
        <end position="159"/>
    </location>
</feature>
<feature type="domain" description="OBG-type G" evidence="1">
    <location>
        <begin position="160"/>
        <end position="334"/>
    </location>
</feature>
<feature type="region of interest" description="Disordered" evidence="3">
    <location>
        <begin position="344"/>
        <end position="370"/>
    </location>
</feature>
<feature type="binding site" evidence="1">
    <location>
        <begin position="166"/>
        <end position="173"/>
    </location>
    <ligand>
        <name>GTP</name>
        <dbReference type="ChEBI" id="CHEBI:37565"/>
    </ligand>
</feature>
<feature type="binding site" evidence="1">
    <location>
        <position position="173"/>
    </location>
    <ligand>
        <name>Mg(2+)</name>
        <dbReference type="ChEBI" id="CHEBI:18420"/>
    </ligand>
</feature>
<feature type="binding site" evidence="1">
    <location>
        <begin position="191"/>
        <end position="195"/>
    </location>
    <ligand>
        <name>GTP</name>
        <dbReference type="ChEBI" id="CHEBI:37565"/>
    </ligand>
</feature>
<feature type="binding site" evidence="1">
    <location>
        <position position="193"/>
    </location>
    <ligand>
        <name>Mg(2+)</name>
        <dbReference type="ChEBI" id="CHEBI:18420"/>
    </ligand>
</feature>
<feature type="binding site" evidence="1">
    <location>
        <begin position="213"/>
        <end position="216"/>
    </location>
    <ligand>
        <name>GTP</name>
        <dbReference type="ChEBI" id="CHEBI:37565"/>
    </ligand>
</feature>
<feature type="binding site" evidence="1">
    <location>
        <begin position="284"/>
        <end position="287"/>
    </location>
    <ligand>
        <name>GTP</name>
        <dbReference type="ChEBI" id="CHEBI:37565"/>
    </ligand>
</feature>
<feature type="binding site" evidence="1">
    <location>
        <begin position="315"/>
        <end position="317"/>
    </location>
    <ligand>
        <name>GTP</name>
        <dbReference type="ChEBI" id="CHEBI:37565"/>
    </ligand>
</feature>
<protein>
    <recommendedName>
        <fullName evidence="1">GTPase Obg</fullName>
        <ecNumber evidence="1">3.6.5.-</ecNumber>
    </recommendedName>
    <alternativeName>
        <fullName evidence="1">GTP-binding protein Obg</fullName>
    </alternativeName>
</protein>